<feature type="chain" id="PRO_1000001606" description="Recombination protein RecR">
    <location>
        <begin position="1"/>
        <end position="199"/>
    </location>
</feature>
<feature type="domain" description="Toprim" evidence="1">
    <location>
        <begin position="81"/>
        <end position="176"/>
    </location>
</feature>
<feature type="zinc finger region" description="C4-type" evidence="1">
    <location>
        <begin position="57"/>
        <end position="72"/>
    </location>
</feature>
<evidence type="ECO:0000255" key="1">
    <source>
        <dbReference type="HAMAP-Rule" id="MF_00017"/>
    </source>
</evidence>
<dbReference type="EMBL" id="CP000681">
    <property type="protein sequence ID" value="ABP76021.1"/>
    <property type="molecule type" value="Genomic_DNA"/>
</dbReference>
<dbReference type="SMR" id="A4Y7T8"/>
<dbReference type="STRING" id="319224.Sputcn32_2300"/>
<dbReference type="KEGG" id="spc:Sputcn32_2300"/>
<dbReference type="eggNOG" id="COG0353">
    <property type="taxonomic scope" value="Bacteria"/>
</dbReference>
<dbReference type="HOGENOM" id="CLU_060739_1_2_6"/>
<dbReference type="GO" id="GO:0003677">
    <property type="term" value="F:DNA binding"/>
    <property type="evidence" value="ECO:0007669"/>
    <property type="project" value="UniProtKB-UniRule"/>
</dbReference>
<dbReference type="GO" id="GO:0008270">
    <property type="term" value="F:zinc ion binding"/>
    <property type="evidence" value="ECO:0007669"/>
    <property type="project" value="UniProtKB-KW"/>
</dbReference>
<dbReference type="GO" id="GO:0006310">
    <property type="term" value="P:DNA recombination"/>
    <property type="evidence" value="ECO:0007669"/>
    <property type="project" value="UniProtKB-UniRule"/>
</dbReference>
<dbReference type="GO" id="GO:0006281">
    <property type="term" value="P:DNA repair"/>
    <property type="evidence" value="ECO:0007669"/>
    <property type="project" value="UniProtKB-UniRule"/>
</dbReference>
<dbReference type="CDD" id="cd01025">
    <property type="entry name" value="TOPRIM_recR"/>
    <property type="match status" value="1"/>
</dbReference>
<dbReference type="FunFam" id="1.10.8.420:FF:000001">
    <property type="entry name" value="Recombination protein RecR"/>
    <property type="match status" value="1"/>
</dbReference>
<dbReference type="FunFam" id="3.40.1360.10:FF:000001">
    <property type="entry name" value="Recombination protein RecR"/>
    <property type="match status" value="1"/>
</dbReference>
<dbReference type="Gene3D" id="3.40.1360.10">
    <property type="match status" value="1"/>
</dbReference>
<dbReference type="Gene3D" id="6.10.250.240">
    <property type="match status" value="1"/>
</dbReference>
<dbReference type="Gene3D" id="1.10.8.420">
    <property type="entry name" value="RecR Domain 1"/>
    <property type="match status" value="1"/>
</dbReference>
<dbReference type="HAMAP" id="MF_00017">
    <property type="entry name" value="RecR"/>
    <property type="match status" value="1"/>
</dbReference>
<dbReference type="InterPro" id="IPR000093">
    <property type="entry name" value="DNA_Rcmb_RecR"/>
</dbReference>
<dbReference type="InterPro" id="IPR023627">
    <property type="entry name" value="Rcmb_RecR"/>
</dbReference>
<dbReference type="InterPro" id="IPR015967">
    <property type="entry name" value="Rcmb_RecR_Znf"/>
</dbReference>
<dbReference type="InterPro" id="IPR006171">
    <property type="entry name" value="TOPRIM_dom"/>
</dbReference>
<dbReference type="InterPro" id="IPR034137">
    <property type="entry name" value="TOPRIM_RecR"/>
</dbReference>
<dbReference type="NCBIfam" id="TIGR00615">
    <property type="entry name" value="recR"/>
    <property type="match status" value="1"/>
</dbReference>
<dbReference type="PANTHER" id="PTHR30446">
    <property type="entry name" value="RECOMBINATION PROTEIN RECR"/>
    <property type="match status" value="1"/>
</dbReference>
<dbReference type="PANTHER" id="PTHR30446:SF0">
    <property type="entry name" value="RECOMBINATION PROTEIN RECR"/>
    <property type="match status" value="1"/>
</dbReference>
<dbReference type="Pfam" id="PF21175">
    <property type="entry name" value="RecR_C"/>
    <property type="match status" value="1"/>
</dbReference>
<dbReference type="Pfam" id="PF21176">
    <property type="entry name" value="RecR_HhH"/>
    <property type="match status" value="1"/>
</dbReference>
<dbReference type="Pfam" id="PF02132">
    <property type="entry name" value="RecR_ZnF"/>
    <property type="match status" value="1"/>
</dbReference>
<dbReference type="Pfam" id="PF13662">
    <property type="entry name" value="Toprim_4"/>
    <property type="match status" value="1"/>
</dbReference>
<dbReference type="SMART" id="SM00493">
    <property type="entry name" value="TOPRIM"/>
    <property type="match status" value="1"/>
</dbReference>
<dbReference type="SUPFAM" id="SSF111304">
    <property type="entry name" value="Recombination protein RecR"/>
    <property type="match status" value="1"/>
</dbReference>
<dbReference type="PROSITE" id="PS50880">
    <property type="entry name" value="TOPRIM"/>
    <property type="match status" value="1"/>
</dbReference>
<proteinExistence type="inferred from homology"/>
<name>RECR_SHEPC</name>
<gene>
    <name evidence="1" type="primary">recR</name>
    <name type="ordered locus">Sputcn32_2300</name>
</gene>
<reference key="1">
    <citation type="submission" date="2007-04" db="EMBL/GenBank/DDBJ databases">
        <title>Complete sequence of Shewanella putrefaciens CN-32.</title>
        <authorList>
            <consortium name="US DOE Joint Genome Institute"/>
            <person name="Copeland A."/>
            <person name="Lucas S."/>
            <person name="Lapidus A."/>
            <person name="Barry K."/>
            <person name="Detter J.C."/>
            <person name="Glavina del Rio T."/>
            <person name="Hammon N."/>
            <person name="Israni S."/>
            <person name="Dalin E."/>
            <person name="Tice H."/>
            <person name="Pitluck S."/>
            <person name="Chain P."/>
            <person name="Malfatti S."/>
            <person name="Shin M."/>
            <person name="Vergez L."/>
            <person name="Schmutz J."/>
            <person name="Larimer F."/>
            <person name="Land M."/>
            <person name="Hauser L."/>
            <person name="Kyrpides N."/>
            <person name="Mikhailova N."/>
            <person name="Romine M.F."/>
            <person name="Fredrickson J."/>
            <person name="Tiedje J."/>
            <person name="Richardson P."/>
        </authorList>
    </citation>
    <scope>NUCLEOTIDE SEQUENCE [LARGE SCALE GENOMIC DNA]</scope>
    <source>
        <strain>CN-32 / ATCC BAA-453</strain>
    </source>
</reference>
<sequence>MKFSPLLDELIQSLRCLPGVGPKSAQRMAFQLLERDRKAGLKLASALSSAMSDVGHCQSCRTYTEETLCPICASHKRGSSSTICVVETPADVLAIEAGGHFTGRYFVLLGHLSPLDGVGPEELGLALLERHLASGDVSELILATNPTVEGEATAHFIADMARRHKVMISRIAHGVPVGGELEYVDSTTLALSFNGRLPL</sequence>
<organism>
    <name type="scientific">Shewanella putrefaciens (strain CN-32 / ATCC BAA-453)</name>
    <dbReference type="NCBI Taxonomy" id="319224"/>
    <lineage>
        <taxon>Bacteria</taxon>
        <taxon>Pseudomonadati</taxon>
        <taxon>Pseudomonadota</taxon>
        <taxon>Gammaproteobacteria</taxon>
        <taxon>Alteromonadales</taxon>
        <taxon>Shewanellaceae</taxon>
        <taxon>Shewanella</taxon>
    </lineage>
</organism>
<comment type="function">
    <text evidence="1">May play a role in DNA repair. It seems to be involved in an RecBC-independent recombinational process of DNA repair. It may act with RecF and RecO.</text>
</comment>
<comment type="similarity">
    <text evidence="1">Belongs to the RecR family.</text>
</comment>
<protein>
    <recommendedName>
        <fullName evidence="1">Recombination protein RecR</fullName>
    </recommendedName>
</protein>
<keyword id="KW-0227">DNA damage</keyword>
<keyword id="KW-0233">DNA recombination</keyword>
<keyword id="KW-0234">DNA repair</keyword>
<keyword id="KW-0479">Metal-binding</keyword>
<keyword id="KW-0862">Zinc</keyword>
<keyword id="KW-0863">Zinc-finger</keyword>
<accession>A4Y7T8</accession>